<protein>
    <recommendedName>
        <fullName>Putative S-adenosyl-L-methionine-dependent methyltransferase MRA_0739</fullName>
        <ecNumber>2.1.1.-</ecNumber>
    </recommendedName>
</protein>
<feature type="chain" id="PRO_0000361232" description="Putative S-adenosyl-L-methionine-dependent methyltransferase MRA_0739">
    <location>
        <begin position="1"/>
        <end position="318"/>
    </location>
</feature>
<feature type="binding site" evidence="1">
    <location>
        <position position="135"/>
    </location>
    <ligand>
        <name>S-adenosyl-L-methionine</name>
        <dbReference type="ChEBI" id="CHEBI:59789"/>
    </ligand>
</feature>
<feature type="binding site" evidence="1">
    <location>
        <begin position="164"/>
        <end position="165"/>
    </location>
    <ligand>
        <name>S-adenosyl-L-methionine</name>
        <dbReference type="ChEBI" id="CHEBI:59789"/>
    </ligand>
</feature>
<accession>A5U0B7</accession>
<comment type="function">
    <text evidence="1">Exhibits S-adenosyl-L-methionine-dependent methyltransferase activity.</text>
</comment>
<comment type="similarity">
    <text evidence="2">Belongs to the UPF0677 family.</text>
</comment>
<dbReference type="EC" id="2.1.1.-"/>
<dbReference type="EMBL" id="CP000611">
    <property type="protein sequence ID" value="ABQ72467.1"/>
    <property type="molecule type" value="Genomic_DNA"/>
</dbReference>
<dbReference type="RefSeq" id="WP_003403717.1">
    <property type="nucleotide sequence ID" value="NZ_CP016972.1"/>
</dbReference>
<dbReference type="SMR" id="A5U0B7"/>
<dbReference type="KEGG" id="mra:MRA_0739"/>
<dbReference type="eggNOG" id="COG3315">
    <property type="taxonomic scope" value="Bacteria"/>
</dbReference>
<dbReference type="HOGENOM" id="CLU_056160_2_1_11"/>
<dbReference type="Proteomes" id="UP000001988">
    <property type="component" value="Chromosome"/>
</dbReference>
<dbReference type="GO" id="GO:0008168">
    <property type="term" value="F:methyltransferase activity"/>
    <property type="evidence" value="ECO:0007669"/>
    <property type="project" value="UniProtKB-KW"/>
</dbReference>
<dbReference type="GO" id="GO:0032259">
    <property type="term" value="P:methylation"/>
    <property type="evidence" value="ECO:0007669"/>
    <property type="project" value="UniProtKB-KW"/>
</dbReference>
<dbReference type="Gene3D" id="3.40.50.150">
    <property type="entry name" value="Vaccinia Virus protein VP39"/>
    <property type="match status" value="1"/>
</dbReference>
<dbReference type="InterPro" id="IPR007213">
    <property type="entry name" value="Ppm1/Ppm2/Tcmp"/>
</dbReference>
<dbReference type="InterPro" id="IPR029063">
    <property type="entry name" value="SAM-dependent_MTases_sf"/>
</dbReference>
<dbReference type="InterPro" id="IPR011610">
    <property type="entry name" value="SAM_mthyl_Trfase_ML2640-like"/>
</dbReference>
<dbReference type="NCBIfam" id="TIGR00027">
    <property type="entry name" value="mthyl_TIGR00027"/>
    <property type="match status" value="1"/>
</dbReference>
<dbReference type="PANTHER" id="PTHR43619">
    <property type="entry name" value="S-ADENOSYL-L-METHIONINE-DEPENDENT METHYLTRANSFERASE YKTD-RELATED"/>
    <property type="match status" value="1"/>
</dbReference>
<dbReference type="PANTHER" id="PTHR43619:SF2">
    <property type="entry name" value="S-ADENOSYL-L-METHIONINE-DEPENDENT METHYLTRANSFERASES SUPERFAMILY PROTEIN"/>
    <property type="match status" value="1"/>
</dbReference>
<dbReference type="Pfam" id="PF04072">
    <property type="entry name" value="LCM"/>
    <property type="match status" value="1"/>
</dbReference>
<dbReference type="SUPFAM" id="SSF53335">
    <property type="entry name" value="S-adenosyl-L-methionine-dependent methyltransferases"/>
    <property type="match status" value="1"/>
</dbReference>
<evidence type="ECO:0000250" key="1"/>
<evidence type="ECO:0000305" key="2"/>
<sequence length="318" mass="34950">MTQTGSARFEGDSWDLASSVGLTATMVAAARAVAGRAPGALVNDQFAEPLVRAVGVDFFVRMASGELDPDELAEDEANGLRRFADAMAIRTHYFDNFFLDATRAGIRQAVILASGLDSRAYRLRWPAGTIVFEVDQPQVIDFKTTTLAGLGAAPTTDRRTVAVDLRDDWPTALQKAGFDNAQRTAWIAEGLLGYLSAEAQDRLLDQITAQSVPGSQFATEVLRDINRLNEEELRGRMRRLAERFRRHGLDLDMSGLVYFGDRTDARTYLADHGWRTASASTTDLLAEHGLPPIDGDDAPFGEVIYVSAELKQKHQDTR</sequence>
<gene>
    <name type="ordered locus">MRA_0739</name>
</gene>
<keyword id="KW-0489">Methyltransferase</keyword>
<keyword id="KW-1185">Reference proteome</keyword>
<keyword id="KW-0949">S-adenosyl-L-methionine</keyword>
<keyword id="KW-0808">Transferase</keyword>
<organism>
    <name type="scientific">Mycobacterium tuberculosis (strain ATCC 25177 / H37Ra)</name>
    <dbReference type="NCBI Taxonomy" id="419947"/>
    <lineage>
        <taxon>Bacteria</taxon>
        <taxon>Bacillati</taxon>
        <taxon>Actinomycetota</taxon>
        <taxon>Actinomycetes</taxon>
        <taxon>Mycobacteriales</taxon>
        <taxon>Mycobacteriaceae</taxon>
        <taxon>Mycobacterium</taxon>
        <taxon>Mycobacterium tuberculosis complex</taxon>
    </lineage>
</organism>
<proteinExistence type="inferred from homology"/>
<name>Y739_MYCTA</name>
<reference key="1">
    <citation type="journal article" date="2008" name="PLoS ONE">
        <title>Genetic basis of virulence attenuation revealed by comparative genomic analysis of Mycobacterium tuberculosis strain H37Ra versus H37Rv.</title>
        <authorList>
            <person name="Zheng H."/>
            <person name="Lu L."/>
            <person name="Wang B."/>
            <person name="Pu S."/>
            <person name="Zhang X."/>
            <person name="Zhu G."/>
            <person name="Shi W."/>
            <person name="Zhang L."/>
            <person name="Wang H."/>
            <person name="Wang S."/>
            <person name="Zhao G."/>
            <person name="Zhang Y."/>
        </authorList>
    </citation>
    <scope>NUCLEOTIDE SEQUENCE [LARGE SCALE GENOMIC DNA]</scope>
    <source>
        <strain>ATCC 25177 / H37Ra</strain>
    </source>
</reference>